<organism>
    <name type="scientific">Arabidopsis thaliana</name>
    <name type="common">Mouse-ear cress</name>
    <dbReference type="NCBI Taxonomy" id="3702"/>
    <lineage>
        <taxon>Eukaryota</taxon>
        <taxon>Viridiplantae</taxon>
        <taxon>Streptophyta</taxon>
        <taxon>Embryophyta</taxon>
        <taxon>Tracheophyta</taxon>
        <taxon>Spermatophyta</taxon>
        <taxon>Magnoliopsida</taxon>
        <taxon>eudicotyledons</taxon>
        <taxon>Gunneridae</taxon>
        <taxon>Pentapetalae</taxon>
        <taxon>rosids</taxon>
        <taxon>malvids</taxon>
        <taxon>Brassicales</taxon>
        <taxon>Brassicaceae</taxon>
        <taxon>Camelineae</taxon>
        <taxon>Arabidopsis</taxon>
    </lineage>
</organism>
<gene>
    <name type="primary">MTPC2</name>
    <name type="synonym">MTP5</name>
    <name type="ordered locus">At3g12100</name>
    <name type="ORF">T21B14.8</name>
</gene>
<sequence length="393" mass="43815">MERSISFNPRGDNELPDDRSSDVGYAANDRRLAYSRSFQQSHGPRTPAVTEAAKPFLDRTVSSIDMPPDIYSVDGSDVFFGEGKDVDMAKVSVLEMVWEVFGVVTSGNRQMKRLFLLIALNVLYSTTELSIGIFTGRVGLVSDAFHLTFGCGLLTFSLFAMATSRKKPDHAYSYGYKRLEVLSAFTNALFLMFMSFSLAVEALHAFIQDESEHKHYLIVSAVTNLLVNLLGVWFFRNYARVNIAYRKAEDMNYHSVCLHVISDSIRSAGLILASWLLSLGVENAEVLCLGLVSVTVFMLVMPLFKATGGVLLQMAPPNIPSSALSKCLRQITSREDVTEVLQARFWEVVPGHTVGSLRLQVKSGIDERPLLQYVYDVYHDLGVQDLTLQTDYT</sequence>
<feature type="chain" id="PRO_0000206121" description="Metal tolerance protein C2">
    <location>
        <begin position="1"/>
        <end position="393"/>
    </location>
</feature>
<feature type="topological domain" description="Cytoplasmic" evidence="2">
    <location>
        <begin position="1"/>
        <end position="113"/>
    </location>
</feature>
<feature type="transmembrane region" description="Helical" evidence="2">
    <location>
        <begin position="114"/>
        <end position="134"/>
    </location>
</feature>
<feature type="topological domain" description="Vacuolar" evidence="2">
    <location>
        <begin position="135"/>
        <end position="139"/>
    </location>
</feature>
<feature type="transmembrane region" description="Helical" evidence="2">
    <location>
        <begin position="140"/>
        <end position="160"/>
    </location>
</feature>
<feature type="topological domain" description="Cytoplasmic" evidence="2">
    <location>
        <begin position="161"/>
        <end position="186"/>
    </location>
</feature>
<feature type="transmembrane region" description="Helical" evidence="2">
    <location>
        <begin position="187"/>
        <end position="207"/>
    </location>
</feature>
<feature type="topological domain" description="Vacuolar" evidence="2">
    <location>
        <begin position="208"/>
        <end position="214"/>
    </location>
</feature>
<feature type="transmembrane region" description="Helical" evidence="2">
    <location>
        <begin position="215"/>
        <end position="235"/>
    </location>
</feature>
<feature type="topological domain" description="Cytoplasmic" evidence="2">
    <location>
        <begin position="236"/>
        <end position="259"/>
    </location>
</feature>
<feature type="transmembrane region" description="Helical" evidence="2">
    <location>
        <begin position="260"/>
        <end position="280"/>
    </location>
</feature>
<feature type="topological domain" description="Vacuolar" evidence="2">
    <location>
        <begin position="281"/>
        <end position="283"/>
    </location>
</feature>
<feature type="transmembrane region" description="Helical" evidence="2">
    <location>
        <begin position="284"/>
        <end position="304"/>
    </location>
</feature>
<feature type="topological domain" description="Cytoplasmic" evidence="2">
    <location>
        <begin position="305"/>
        <end position="393"/>
    </location>
</feature>
<feature type="region of interest" description="Disordered" evidence="3">
    <location>
        <begin position="1"/>
        <end position="23"/>
    </location>
</feature>
<feature type="compositionally biased region" description="Basic and acidic residues" evidence="3">
    <location>
        <begin position="11"/>
        <end position="21"/>
    </location>
</feature>
<reference key="1">
    <citation type="journal article" date="2000" name="DNA Res.">
        <title>Structural analysis of Arabidopsis thaliana chromosome 3. II. Sequence features of the 4,251,695 bp regions covered by 90 P1, TAC and BAC clones.</title>
        <authorList>
            <person name="Kaneko T."/>
            <person name="Katoh T."/>
            <person name="Sato S."/>
            <person name="Nakamura Y."/>
            <person name="Asamizu E."/>
            <person name="Tabata S."/>
        </authorList>
    </citation>
    <scope>NUCLEOTIDE SEQUENCE [LARGE SCALE GENOMIC DNA]</scope>
    <source>
        <strain>cv. Columbia</strain>
    </source>
</reference>
<reference key="2">
    <citation type="journal article" date="2000" name="Nature">
        <title>Sequence and analysis of chromosome 3 of the plant Arabidopsis thaliana.</title>
        <authorList>
            <person name="Salanoubat M."/>
            <person name="Lemcke K."/>
            <person name="Rieger M."/>
            <person name="Ansorge W."/>
            <person name="Unseld M."/>
            <person name="Fartmann B."/>
            <person name="Valle G."/>
            <person name="Bloecker H."/>
            <person name="Perez-Alonso M."/>
            <person name="Obermaier B."/>
            <person name="Delseny M."/>
            <person name="Boutry M."/>
            <person name="Grivell L.A."/>
            <person name="Mache R."/>
            <person name="Puigdomenech P."/>
            <person name="De Simone V."/>
            <person name="Choisne N."/>
            <person name="Artiguenave F."/>
            <person name="Robert C."/>
            <person name="Brottier P."/>
            <person name="Wincker P."/>
            <person name="Cattolico L."/>
            <person name="Weissenbach J."/>
            <person name="Saurin W."/>
            <person name="Quetier F."/>
            <person name="Schaefer M."/>
            <person name="Mueller-Auer S."/>
            <person name="Gabel C."/>
            <person name="Fuchs M."/>
            <person name="Benes V."/>
            <person name="Wurmbach E."/>
            <person name="Drzonek H."/>
            <person name="Erfle H."/>
            <person name="Jordan N."/>
            <person name="Bangert S."/>
            <person name="Wiedelmann R."/>
            <person name="Kranz H."/>
            <person name="Voss H."/>
            <person name="Holland R."/>
            <person name="Brandt P."/>
            <person name="Nyakatura G."/>
            <person name="Vezzi A."/>
            <person name="D'Angelo M."/>
            <person name="Pallavicini A."/>
            <person name="Toppo S."/>
            <person name="Simionati B."/>
            <person name="Conrad A."/>
            <person name="Hornischer K."/>
            <person name="Kauer G."/>
            <person name="Loehnert T.-H."/>
            <person name="Nordsiek G."/>
            <person name="Reichelt J."/>
            <person name="Scharfe M."/>
            <person name="Schoen O."/>
            <person name="Bargues M."/>
            <person name="Terol J."/>
            <person name="Climent J."/>
            <person name="Navarro P."/>
            <person name="Collado C."/>
            <person name="Perez-Perez A."/>
            <person name="Ottenwaelder B."/>
            <person name="Duchemin D."/>
            <person name="Cooke R."/>
            <person name="Laudie M."/>
            <person name="Berger-Llauro C."/>
            <person name="Purnelle B."/>
            <person name="Masuy D."/>
            <person name="de Haan M."/>
            <person name="Maarse A.C."/>
            <person name="Alcaraz J.-P."/>
            <person name="Cottet A."/>
            <person name="Casacuberta E."/>
            <person name="Monfort A."/>
            <person name="Argiriou A."/>
            <person name="Flores M."/>
            <person name="Liguori R."/>
            <person name="Vitale D."/>
            <person name="Mannhaupt G."/>
            <person name="Haase D."/>
            <person name="Schoof H."/>
            <person name="Rudd S."/>
            <person name="Zaccaria P."/>
            <person name="Mewes H.-W."/>
            <person name="Mayer K.F.X."/>
            <person name="Kaul S."/>
            <person name="Town C.D."/>
            <person name="Koo H.L."/>
            <person name="Tallon L.J."/>
            <person name="Jenkins J."/>
            <person name="Rooney T."/>
            <person name="Rizzo M."/>
            <person name="Walts A."/>
            <person name="Utterback T."/>
            <person name="Fujii C.Y."/>
            <person name="Shea T.P."/>
            <person name="Creasy T.H."/>
            <person name="Haas B."/>
            <person name="Maiti R."/>
            <person name="Wu D."/>
            <person name="Peterson J."/>
            <person name="Van Aken S."/>
            <person name="Pai G."/>
            <person name="Militscher J."/>
            <person name="Sellers P."/>
            <person name="Gill J.E."/>
            <person name="Feldblyum T.V."/>
            <person name="Preuss D."/>
            <person name="Lin X."/>
            <person name="Nierman W.C."/>
            <person name="Salzberg S.L."/>
            <person name="White O."/>
            <person name="Venter J.C."/>
            <person name="Fraser C.M."/>
            <person name="Kaneko T."/>
            <person name="Nakamura Y."/>
            <person name="Sato S."/>
            <person name="Kato T."/>
            <person name="Asamizu E."/>
            <person name="Sasamoto S."/>
            <person name="Kimura T."/>
            <person name="Idesawa K."/>
            <person name="Kawashima K."/>
            <person name="Kishida Y."/>
            <person name="Kiyokawa C."/>
            <person name="Kohara M."/>
            <person name="Matsumoto M."/>
            <person name="Matsuno A."/>
            <person name="Muraki A."/>
            <person name="Nakayama S."/>
            <person name="Nakazaki N."/>
            <person name="Shinpo S."/>
            <person name="Takeuchi C."/>
            <person name="Wada T."/>
            <person name="Watanabe A."/>
            <person name="Yamada M."/>
            <person name="Yasuda M."/>
            <person name="Tabata S."/>
        </authorList>
    </citation>
    <scope>NUCLEOTIDE SEQUENCE [LARGE SCALE GENOMIC DNA]</scope>
    <source>
        <strain>cv. Columbia</strain>
    </source>
</reference>
<reference key="3">
    <citation type="journal article" date="2017" name="Plant J.">
        <title>Araport11: a complete reannotation of the Arabidopsis thaliana reference genome.</title>
        <authorList>
            <person name="Cheng C.Y."/>
            <person name="Krishnakumar V."/>
            <person name="Chan A.P."/>
            <person name="Thibaud-Nissen F."/>
            <person name="Schobel S."/>
            <person name="Town C.D."/>
        </authorList>
    </citation>
    <scope>GENOME REANNOTATION</scope>
    <source>
        <strain>cv. Columbia</strain>
    </source>
</reference>
<reference key="4">
    <citation type="submission" date="2004-09" db="EMBL/GenBank/DDBJ databases">
        <title>Arabidopsis ORF clones.</title>
        <authorList>
            <person name="Shinn P."/>
            <person name="Chen H."/>
            <person name="Cheuk R.F."/>
            <person name="Kim C.J."/>
            <person name="Ecker J.R."/>
        </authorList>
    </citation>
    <scope>NUCLEOTIDE SEQUENCE [LARGE SCALE MRNA]</scope>
    <source>
        <strain>cv. Columbia</strain>
    </source>
</reference>
<reference key="5">
    <citation type="journal article" date="2001" name="Plant Physiol.">
        <title>Phylogenetic relationships within cation transporter families of Arabidopsis.</title>
        <authorList>
            <person name="Maeser P."/>
            <person name="Thomine S."/>
            <person name="Schroeder J.I."/>
            <person name="Ward J.M."/>
            <person name="Hirschi K."/>
            <person name="Sze H."/>
            <person name="Talke I.N."/>
            <person name="Amtmann A."/>
            <person name="Maathuis F.J.M."/>
            <person name="Sanders D."/>
            <person name="Harper J.F."/>
            <person name="Tchieu J."/>
            <person name="Gribskov M."/>
            <person name="Persans M.W."/>
            <person name="Salt D.E."/>
            <person name="Kim S.A."/>
            <person name="Guerinot M.L."/>
        </authorList>
    </citation>
    <scope>GENE FAMILY</scope>
    <scope>NOMENCLATURE</scope>
</reference>
<protein>
    <recommendedName>
        <fullName>Metal tolerance protein C2</fullName>
        <shortName>AtMTPc2</shortName>
    </recommendedName>
    <alternativeName>
        <fullName>AtMTP5</fullName>
    </alternativeName>
</protein>
<comment type="function">
    <text evidence="1">Involved in sequestration of excess metal in the cytoplasm into vacuoles to maintain metal homeostasis.</text>
</comment>
<comment type="subcellular location">
    <subcellularLocation>
        <location evidence="1">Vacuole membrane</location>
        <topology evidence="1">Multi-pass membrane protein</topology>
    </subcellularLocation>
    <text>Tonoplast.</text>
</comment>
<comment type="alternative products">
    <event type="alternative splicing"/>
    <isoform>
        <id>Q6ICY4-1</id>
        <name>1</name>
        <sequence type="displayed"/>
    </isoform>
    <text>A number of isoforms are produced. According to EST sequences.</text>
</comment>
<comment type="similarity">
    <text evidence="4">Belongs to the cation diffusion facilitator (CDF) transporter (TC 2.A.4) family.</text>
</comment>
<comment type="sequence caution" evidence="4">
    <conflict type="erroneous gene model prediction">
        <sequence resource="EMBL-CDS" id="AAG51048"/>
    </conflict>
</comment>
<comment type="sequence caution" evidence="4">
    <conflict type="erroneous gene model prediction">
        <sequence resource="EMBL-CDS" id="BAB01958"/>
    </conflict>
</comment>
<keyword id="KW-0025">Alternative splicing</keyword>
<keyword id="KW-0472">Membrane</keyword>
<keyword id="KW-1185">Reference proteome</keyword>
<keyword id="KW-0812">Transmembrane</keyword>
<keyword id="KW-1133">Transmembrane helix</keyword>
<keyword id="KW-0813">Transport</keyword>
<keyword id="KW-0926">Vacuole</keyword>
<accession>Q6ICY4</accession>
<accession>Q9C7C2</accession>
<accession>Q9LH56</accession>
<name>MTPC2_ARATH</name>
<evidence type="ECO:0000250" key="1"/>
<evidence type="ECO:0000255" key="2"/>
<evidence type="ECO:0000256" key="3">
    <source>
        <dbReference type="SAM" id="MobiDB-lite"/>
    </source>
</evidence>
<evidence type="ECO:0000305" key="4"/>
<proteinExistence type="evidence at transcript level"/>
<dbReference type="EMBL" id="AP002063">
    <property type="protein sequence ID" value="BAB01958.1"/>
    <property type="status" value="ALT_SEQ"/>
    <property type="molecule type" value="Genomic_DNA"/>
</dbReference>
<dbReference type="EMBL" id="AC069473">
    <property type="protein sequence ID" value="AAG51048.1"/>
    <property type="status" value="ALT_SEQ"/>
    <property type="molecule type" value="Genomic_DNA"/>
</dbReference>
<dbReference type="EMBL" id="CP002686">
    <property type="protein sequence ID" value="AEE75149.1"/>
    <property type="molecule type" value="Genomic_DNA"/>
</dbReference>
<dbReference type="EMBL" id="BT014889">
    <property type="protein sequence ID" value="AAT44130.1"/>
    <property type="molecule type" value="mRNA"/>
</dbReference>
<dbReference type="EMBL" id="BT015749">
    <property type="protein sequence ID" value="AAU84686.1"/>
    <property type="molecule type" value="mRNA"/>
</dbReference>
<dbReference type="RefSeq" id="NP_187817.2">
    <molecule id="Q6ICY4-1"/>
    <property type="nucleotide sequence ID" value="NM_112045.5"/>
</dbReference>
<dbReference type="SMR" id="Q6ICY4"/>
<dbReference type="BioGRID" id="5718">
    <property type="interactions" value="1"/>
</dbReference>
<dbReference type="FunCoup" id="Q6ICY4">
    <property type="interactions" value="155"/>
</dbReference>
<dbReference type="STRING" id="3702.Q6ICY4"/>
<dbReference type="TCDB" id="2.A.4.4.6">
    <property type="family name" value="the cation diffusion facilitator (cdf) family"/>
</dbReference>
<dbReference type="iPTMnet" id="Q6ICY4"/>
<dbReference type="PaxDb" id="3702-AT3G12100.1"/>
<dbReference type="ProteomicsDB" id="251307">
    <molecule id="Q6ICY4-1"/>
</dbReference>
<dbReference type="EnsemblPlants" id="AT3G12100.1">
    <molecule id="Q6ICY4-1"/>
    <property type="protein sequence ID" value="AT3G12100.1"/>
    <property type="gene ID" value="AT3G12100"/>
</dbReference>
<dbReference type="GeneID" id="820384"/>
<dbReference type="Gramene" id="AT3G12100.1">
    <molecule id="Q6ICY4-1"/>
    <property type="protein sequence ID" value="AT3G12100.1"/>
    <property type="gene ID" value="AT3G12100"/>
</dbReference>
<dbReference type="KEGG" id="ath:AT3G12100"/>
<dbReference type="Araport" id="AT3G12100"/>
<dbReference type="TAIR" id="AT3G12100">
    <property type="gene designation" value="MTP5"/>
</dbReference>
<dbReference type="eggNOG" id="KOG1484">
    <property type="taxonomic scope" value="Eukaryota"/>
</dbReference>
<dbReference type="InParanoid" id="Q6ICY4"/>
<dbReference type="OMA" id="RSGNRYM"/>
<dbReference type="PhylomeDB" id="Q6ICY4"/>
<dbReference type="PRO" id="PR:Q6ICY4"/>
<dbReference type="Proteomes" id="UP000006548">
    <property type="component" value="Chromosome 3"/>
</dbReference>
<dbReference type="ExpressionAtlas" id="Q6ICY4">
    <property type="expression patterns" value="baseline and differential"/>
</dbReference>
<dbReference type="GO" id="GO:0005774">
    <property type="term" value="C:vacuolar membrane"/>
    <property type="evidence" value="ECO:0007669"/>
    <property type="project" value="UniProtKB-SubCell"/>
</dbReference>
<dbReference type="GO" id="GO:0005385">
    <property type="term" value="F:zinc ion transmembrane transporter activity"/>
    <property type="evidence" value="ECO:0007669"/>
    <property type="project" value="InterPro"/>
</dbReference>
<dbReference type="GO" id="GO:0006882">
    <property type="term" value="P:intracellular zinc ion homeostasis"/>
    <property type="evidence" value="ECO:0007669"/>
    <property type="project" value="InterPro"/>
</dbReference>
<dbReference type="GO" id="GO:0009624">
    <property type="term" value="P:response to nematode"/>
    <property type="evidence" value="ECO:0007007"/>
    <property type="project" value="TAIR"/>
</dbReference>
<dbReference type="FunFam" id="1.20.1510.10:FF:000019">
    <property type="entry name" value="Metal tolerance protein C2"/>
    <property type="match status" value="1"/>
</dbReference>
<dbReference type="Gene3D" id="1.20.1510.10">
    <property type="entry name" value="Cation efflux protein transmembrane domain"/>
    <property type="match status" value="1"/>
</dbReference>
<dbReference type="InterPro" id="IPR002524">
    <property type="entry name" value="Cation_efflux"/>
</dbReference>
<dbReference type="InterPro" id="IPR027469">
    <property type="entry name" value="Cation_efflux_TMD_sf"/>
</dbReference>
<dbReference type="InterPro" id="IPR045316">
    <property type="entry name" value="Msc2-like"/>
</dbReference>
<dbReference type="NCBIfam" id="TIGR01297">
    <property type="entry name" value="CDF"/>
    <property type="match status" value="1"/>
</dbReference>
<dbReference type="PANTHER" id="PTHR45755">
    <property type="match status" value="1"/>
</dbReference>
<dbReference type="PANTHER" id="PTHR45755:SF3">
    <property type="entry name" value="METAL TOLERANCE PROTEIN C2"/>
    <property type="match status" value="1"/>
</dbReference>
<dbReference type="Pfam" id="PF01545">
    <property type="entry name" value="Cation_efflux"/>
    <property type="match status" value="1"/>
</dbReference>
<dbReference type="SUPFAM" id="SSF161111">
    <property type="entry name" value="Cation efflux protein transmembrane domain-like"/>
    <property type="match status" value="1"/>
</dbReference>